<proteinExistence type="evidence at transcript level"/>
<reference key="1">
    <citation type="submission" date="2007-04" db="EMBL/GenBank/DDBJ databases">
        <title>Zebrafish homolog of Maid (ZHM) is an important regulator for liver development, regeneration and hepatocarcinogenesis.</title>
        <authorList>
            <person name="Fujisawa K."/>
            <person name="Terai S."/>
            <person name="Matsumoto T."/>
            <person name="Sakaida I."/>
        </authorList>
    </citation>
    <scope>NUCLEOTIDE SEQUENCE [MRNA]</scope>
    <source>
        <tissue>Ovary</tissue>
    </source>
</reference>
<reference key="2">
    <citation type="submission" date="2007-03" db="EMBL/GenBank/DDBJ databases">
        <authorList>
            <consortium name="NIH - Zebrafish Gene Collection (ZGC) project"/>
        </authorList>
    </citation>
    <scope>NUCLEOTIDE SEQUENCE [LARGE SCALE MRNA]</scope>
    <source>
        <tissue>Olfactory epithelium</tissue>
        <tissue>Ovary</tissue>
    </source>
</reference>
<feature type="chain" id="PRO_0000323377" description="Cyclin-D1-binding protein 1 homolog">
    <location>
        <begin position="1"/>
        <end position="344"/>
    </location>
</feature>
<feature type="region of interest" description="Disordered" evidence="2">
    <location>
        <begin position="191"/>
        <end position="215"/>
    </location>
</feature>
<feature type="sequence conflict" description="In Ref. 2; AAH93146." evidence="3" ref="2">
    <original>L</original>
    <variation>V</variation>
    <location>
        <position position="137"/>
    </location>
</feature>
<feature type="sequence conflict" description="In Ref. 2; AAI33860." evidence="3" ref="2">
    <original>C</original>
    <variation>S</variation>
    <location>
        <position position="173"/>
    </location>
</feature>
<feature type="sequence conflict" description="In Ref. 2; AAI33860." evidence="3" ref="2">
    <original>L</original>
    <variation>LDD</variation>
    <location>
        <position position="199"/>
    </location>
</feature>
<evidence type="ECO:0000250" key="1"/>
<evidence type="ECO:0000256" key="2">
    <source>
        <dbReference type="SAM" id="MobiDB-lite"/>
    </source>
</evidence>
<evidence type="ECO:0000305" key="3"/>
<organism>
    <name type="scientific">Danio rerio</name>
    <name type="common">Zebrafish</name>
    <name type="synonym">Brachydanio rerio</name>
    <dbReference type="NCBI Taxonomy" id="7955"/>
    <lineage>
        <taxon>Eukaryota</taxon>
        <taxon>Metazoa</taxon>
        <taxon>Chordata</taxon>
        <taxon>Craniata</taxon>
        <taxon>Vertebrata</taxon>
        <taxon>Euteleostomi</taxon>
        <taxon>Actinopterygii</taxon>
        <taxon>Neopterygii</taxon>
        <taxon>Teleostei</taxon>
        <taxon>Ostariophysi</taxon>
        <taxon>Cypriniformes</taxon>
        <taxon>Danionidae</taxon>
        <taxon>Danioninae</taxon>
        <taxon>Danio</taxon>
    </lineage>
</organism>
<sequence length="344" mass="37510">MSAENSRSEALLPLRNLWNSVKCSRDRVRDGESNDSSGTFSLANFWEILNEAVKAVSQEATKLSLMFSKPPLPSDEDCAKMGECVQKSVLTLCTVYFWLPKSQGVTLRRSVRDATAEVLEGLVQLLDVILSSPGQSLSQEQLTSTGSVWAACDHFDQIPKDNRSAVLAVLSSCVGLVKDALEEMQQALAESQDPFGDVLDDDDDDEGGRGNQDRYWSASDRQLIGQCEGLLKASAASLRKLSSAVRHNAQLETEQEIAQLDDLADAAAHVSPCVDDLALSLYPPVDRAAVEQNVCRLAAVLKKLLDITRSSHVCAEADVSWVEFLSGAVEHNLEKVRSLLRSDS</sequence>
<dbReference type="EMBL" id="EF581817">
    <property type="protein sequence ID" value="ABU87505.1"/>
    <property type="molecule type" value="mRNA"/>
</dbReference>
<dbReference type="EMBL" id="BC093146">
    <property type="protein sequence ID" value="AAH93146.1"/>
    <property type="status" value="ALT_INIT"/>
    <property type="molecule type" value="mRNA"/>
</dbReference>
<dbReference type="EMBL" id="BC133859">
    <property type="protein sequence ID" value="AAI33860.1"/>
    <property type="molecule type" value="mRNA"/>
</dbReference>
<dbReference type="RefSeq" id="NP_001082834.1">
    <property type="nucleotide sequence ID" value="NM_001089365.1"/>
</dbReference>
<dbReference type="SMR" id="A3KNI7"/>
<dbReference type="FunCoup" id="A3KNI7">
    <property type="interactions" value="254"/>
</dbReference>
<dbReference type="STRING" id="7955.ENSDARP00000057465"/>
<dbReference type="PaxDb" id="7955-ENSDARP00000057465"/>
<dbReference type="PeptideAtlas" id="A3KNI7"/>
<dbReference type="GeneID" id="553373"/>
<dbReference type="KEGG" id="dre:553373"/>
<dbReference type="AGR" id="ZFIN:ZDB-GENE-070410-17"/>
<dbReference type="CTD" id="23582"/>
<dbReference type="ZFIN" id="ZDB-GENE-070410-17">
    <property type="gene designation" value="ccndbp1"/>
</dbReference>
<dbReference type="eggNOG" id="ENOG502SGCW">
    <property type="taxonomic scope" value="Eukaryota"/>
</dbReference>
<dbReference type="InParanoid" id="A3KNI7"/>
<dbReference type="OrthoDB" id="41588at2759"/>
<dbReference type="PhylomeDB" id="A3KNI7"/>
<dbReference type="PRO" id="PR:A3KNI7"/>
<dbReference type="Proteomes" id="UP000000437">
    <property type="component" value="Chromosome 6"/>
</dbReference>
<dbReference type="GO" id="GO:0005737">
    <property type="term" value="C:cytoplasm"/>
    <property type="evidence" value="ECO:0000314"/>
    <property type="project" value="ZFIN"/>
</dbReference>
<dbReference type="GO" id="GO:0005634">
    <property type="term" value="C:nucleus"/>
    <property type="evidence" value="ECO:0000318"/>
    <property type="project" value="GO_Central"/>
</dbReference>
<dbReference type="FunFam" id="1.20.1410.10:FF:000005">
    <property type="entry name" value="cyclin-D1-binding protein 1"/>
    <property type="match status" value="1"/>
</dbReference>
<dbReference type="FunFam" id="1.20.1420.10:FF:000008">
    <property type="entry name" value="Cyclin-D1-binding protein 1 homolog"/>
    <property type="match status" value="1"/>
</dbReference>
<dbReference type="Gene3D" id="1.20.1410.10">
    <property type="entry name" value="I/LWEQ domain"/>
    <property type="match status" value="1"/>
</dbReference>
<dbReference type="Gene3D" id="1.20.1420.10">
    <property type="entry name" value="Talin, central domain"/>
    <property type="match status" value="1"/>
</dbReference>
<dbReference type="InterPro" id="IPR026907">
    <property type="entry name" value="GCIP-like"/>
</dbReference>
<dbReference type="InterPro" id="IPR049317">
    <property type="entry name" value="GCIP-like_N"/>
</dbReference>
<dbReference type="InterPro" id="IPR049318">
    <property type="entry name" value="GCIP_C"/>
</dbReference>
<dbReference type="PANTHER" id="PTHR15492">
    <property type="entry name" value="CYCLIN D1-BINDING PROTEIN 1"/>
    <property type="match status" value="1"/>
</dbReference>
<dbReference type="PANTHER" id="PTHR15492:SF1">
    <property type="entry name" value="CYCLIN-D1-BINDING PROTEIN 1"/>
    <property type="match status" value="1"/>
</dbReference>
<dbReference type="Pfam" id="PF20936">
    <property type="entry name" value="GCIP_C"/>
    <property type="match status" value="1"/>
</dbReference>
<dbReference type="Pfam" id="PF13324">
    <property type="entry name" value="GCIP_N"/>
    <property type="match status" value="1"/>
</dbReference>
<accession>A3KNI7</accession>
<accession>A8DS61</accession>
<accession>Q567K0</accession>
<keyword id="KW-0131">Cell cycle</keyword>
<keyword id="KW-0963">Cytoplasm</keyword>
<keyword id="KW-0539">Nucleus</keyword>
<keyword id="KW-1185">Reference proteome</keyword>
<protein>
    <recommendedName>
        <fullName>Cyclin-D1-binding protein 1 homolog</fullName>
    </recommendedName>
    <alternativeName>
        <fullName>Zebrafish homolog of Maid</fullName>
    </alternativeName>
</protein>
<gene>
    <name type="primary">ccndbp1</name>
    <name type="synonym">zhm</name>
    <name type="ORF">zgc:162082</name>
</gene>
<comment type="function">
    <text evidence="1">May negatively regulate cell cycle progression.</text>
</comment>
<comment type="subcellular location">
    <subcellularLocation>
        <location evidence="1">Cytoplasm</location>
    </subcellularLocation>
    <subcellularLocation>
        <location evidence="1">Nucleus</location>
    </subcellularLocation>
</comment>
<comment type="similarity">
    <text evidence="3">Belongs to the CCNDBP1 family.</text>
</comment>
<comment type="sequence caution" evidence="3">
    <conflict type="erroneous initiation">
        <sequence resource="EMBL-CDS" id="AAH93146"/>
    </conflict>
</comment>
<name>CCDB1_DANRE</name>